<comment type="function">
    <text evidence="1">Catalyzes the 2-thiolation of uridine at the wobble position (U34) of tRNA(Lys), tRNA(Glu) and tRNA(Gln), leading to the formation of s(2)U34, the first step of tRNA-mnm(5)s(2)U34 synthesis. Sulfur is provided by IscS, via a sulfur-relay system. Binds ATP and its substrate tRNAs.</text>
</comment>
<comment type="catalytic activity">
    <reaction evidence="1">
        <text>S-sulfanyl-L-cysteinyl-[protein] + uridine(34) in tRNA + AH2 + ATP = 2-thiouridine(34) in tRNA + L-cysteinyl-[protein] + A + AMP + diphosphate + H(+)</text>
        <dbReference type="Rhea" id="RHEA:47032"/>
        <dbReference type="Rhea" id="RHEA-COMP:10131"/>
        <dbReference type="Rhea" id="RHEA-COMP:11726"/>
        <dbReference type="Rhea" id="RHEA-COMP:11727"/>
        <dbReference type="Rhea" id="RHEA-COMP:11728"/>
        <dbReference type="ChEBI" id="CHEBI:13193"/>
        <dbReference type="ChEBI" id="CHEBI:15378"/>
        <dbReference type="ChEBI" id="CHEBI:17499"/>
        <dbReference type="ChEBI" id="CHEBI:29950"/>
        <dbReference type="ChEBI" id="CHEBI:30616"/>
        <dbReference type="ChEBI" id="CHEBI:33019"/>
        <dbReference type="ChEBI" id="CHEBI:61963"/>
        <dbReference type="ChEBI" id="CHEBI:65315"/>
        <dbReference type="ChEBI" id="CHEBI:87170"/>
        <dbReference type="ChEBI" id="CHEBI:456215"/>
        <dbReference type="EC" id="2.8.1.13"/>
    </reaction>
</comment>
<comment type="subunit">
    <text evidence="1">Interacts with TusE.</text>
</comment>
<comment type="subcellular location">
    <subcellularLocation>
        <location evidence="1">Cytoplasm</location>
    </subcellularLocation>
</comment>
<comment type="similarity">
    <text evidence="1">Belongs to the MnmA/TRMU family.</text>
</comment>
<comment type="sequence caution" evidence="2">
    <conflict type="erroneous initiation">
        <sequence resource="EMBL-CDS" id="ABR76574"/>
    </conflict>
</comment>
<proteinExistence type="inferred from homology"/>
<reference key="1">
    <citation type="submission" date="2006-09" db="EMBL/GenBank/DDBJ databases">
        <authorList>
            <consortium name="The Klebsiella pneumonia Genome Sequencing Project"/>
            <person name="McClelland M."/>
            <person name="Sanderson E.K."/>
            <person name="Spieth J."/>
            <person name="Clifton W.S."/>
            <person name="Latreille P."/>
            <person name="Sabo A."/>
            <person name="Pepin K."/>
            <person name="Bhonagiri V."/>
            <person name="Porwollik S."/>
            <person name="Ali J."/>
            <person name="Wilson R.K."/>
        </authorList>
    </citation>
    <scope>NUCLEOTIDE SEQUENCE [LARGE SCALE GENOMIC DNA]</scope>
    <source>
        <strain>ATCC 700721 / MGH 78578</strain>
    </source>
</reference>
<evidence type="ECO:0000255" key="1">
    <source>
        <dbReference type="HAMAP-Rule" id="MF_00144"/>
    </source>
</evidence>
<evidence type="ECO:0000305" key="2"/>
<feature type="chain" id="PRO_0000349668" description="tRNA-specific 2-thiouridylase MnmA">
    <location>
        <begin position="1"/>
        <end position="368"/>
    </location>
</feature>
<feature type="region of interest" description="Interaction with target base in tRNA" evidence="1">
    <location>
        <begin position="97"/>
        <end position="99"/>
    </location>
</feature>
<feature type="region of interest" description="Interaction with tRNA" evidence="1">
    <location>
        <begin position="149"/>
        <end position="151"/>
    </location>
</feature>
<feature type="region of interest" description="Interaction with tRNA" evidence="1">
    <location>
        <begin position="311"/>
        <end position="312"/>
    </location>
</feature>
<feature type="active site" description="Nucleophile" evidence="1">
    <location>
        <position position="102"/>
    </location>
</feature>
<feature type="active site" description="Cysteine persulfide intermediate" evidence="1">
    <location>
        <position position="199"/>
    </location>
</feature>
<feature type="binding site" evidence="1">
    <location>
        <begin position="11"/>
        <end position="18"/>
    </location>
    <ligand>
        <name>ATP</name>
        <dbReference type="ChEBI" id="CHEBI:30616"/>
    </ligand>
</feature>
<feature type="binding site" evidence="1">
    <location>
        <position position="37"/>
    </location>
    <ligand>
        <name>ATP</name>
        <dbReference type="ChEBI" id="CHEBI:30616"/>
    </ligand>
</feature>
<feature type="binding site" evidence="1">
    <location>
        <position position="127"/>
    </location>
    <ligand>
        <name>ATP</name>
        <dbReference type="ChEBI" id="CHEBI:30616"/>
    </ligand>
</feature>
<feature type="site" description="Interaction with tRNA" evidence="1">
    <location>
        <position position="128"/>
    </location>
</feature>
<feature type="site" description="Interaction with tRNA" evidence="1">
    <location>
        <position position="344"/>
    </location>
</feature>
<feature type="disulfide bond" description="Alternate" evidence="1">
    <location>
        <begin position="102"/>
        <end position="199"/>
    </location>
</feature>
<protein>
    <recommendedName>
        <fullName evidence="1">tRNA-specific 2-thiouridylase MnmA</fullName>
        <ecNumber evidence="1">2.8.1.13</ecNumber>
    </recommendedName>
</protein>
<organism>
    <name type="scientific">Klebsiella pneumoniae subsp. pneumoniae (strain ATCC 700721 / MGH 78578)</name>
    <dbReference type="NCBI Taxonomy" id="272620"/>
    <lineage>
        <taxon>Bacteria</taxon>
        <taxon>Pseudomonadati</taxon>
        <taxon>Pseudomonadota</taxon>
        <taxon>Gammaproteobacteria</taxon>
        <taxon>Enterobacterales</taxon>
        <taxon>Enterobacteriaceae</taxon>
        <taxon>Klebsiella/Raoultella group</taxon>
        <taxon>Klebsiella</taxon>
        <taxon>Klebsiella pneumoniae complex</taxon>
    </lineage>
</organism>
<accession>A6T7K3</accession>
<name>MNMA_KLEP7</name>
<keyword id="KW-0067">ATP-binding</keyword>
<keyword id="KW-0963">Cytoplasm</keyword>
<keyword id="KW-1015">Disulfide bond</keyword>
<keyword id="KW-0547">Nucleotide-binding</keyword>
<keyword id="KW-0694">RNA-binding</keyword>
<keyword id="KW-0808">Transferase</keyword>
<keyword id="KW-0819">tRNA processing</keyword>
<keyword id="KW-0820">tRNA-binding</keyword>
<dbReference type="EC" id="2.8.1.13" evidence="1"/>
<dbReference type="EMBL" id="CP000647">
    <property type="protein sequence ID" value="ABR76574.1"/>
    <property type="status" value="ALT_INIT"/>
    <property type="molecule type" value="Genomic_DNA"/>
</dbReference>
<dbReference type="RefSeq" id="WP_004150803.1">
    <property type="nucleotide sequence ID" value="NC_009648.1"/>
</dbReference>
<dbReference type="SMR" id="A6T7K3"/>
<dbReference type="STRING" id="272620.KPN_01141"/>
<dbReference type="jPOST" id="A6T7K3"/>
<dbReference type="PaxDb" id="272620-KPN_01141"/>
<dbReference type="EnsemblBacteria" id="ABR76574">
    <property type="protein sequence ID" value="ABR76574"/>
    <property type="gene ID" value="KPN_01141"/>
</dbReference>
<dbReference type="KEGG" id="kpn:KPN_01141"/>
<dbReference type="HOGENOM" id="CLU_035188_1_0_6"/>
<dbReference type="Proteomes" id="UP000000265">
    <property type="component" value="Chromosome"/>
</dbReference>
<dbReference type="GO" id="GO:0005737">
    <property type="term" value="C:cytoplasm"/>
    <property type="evidence" value="ECO:0007669"/>
    <property type="project" value="UniProtKB-SubCell"/>
</dbReference>
<dbReference type="GO" id="GO:0005524">
    <property type="term" value="F:ATP binding"/>
    <property type="evidence" value="ECO:0007669"/>
    <property type="project" value="UniProtKB-KW"/>
</dbReference>
<dbReference type="GO" id="GO:0000049">
    <property type="term" value="F:tRNA binding"/>
    <property type="evidence" value="ECO:0007669"/>
    <property type="project" value="UniProtKB-KW"/>
</dbReference>
<dbReference type="GO" id="GO:0103016">
    <property type="term" value="F:tRNA-uridine 2-sulfurtransferase activity"/>
    <property type="evidence" value="ECO:0007669"/>
    <property type="project" value="UniProtKB-EC"/>
</dbReference>
<dbReference type="GO" id="GO:0002143">
    <property type="term" value="P:tRNA wobble position uridine thiolation"/>
    <property type="evidence" value="ECO:0007669"/>
    <property type="project" value="TreeGrafter"/>
</dbReference>
<dbReference type="CDD" id="cd01998">
    <property type="entry name" value="MnmA_TRMU-like"/>
    <property type="match status" value="1"/>
</dbReference>
<dbReference type="FunFam" id="2.30.30.280:FF:000001">
    <property type="entry name" value="tRNA-specific 2-thiouridylase MnmA"/>
    <property type="match status" value="1"/>
</dbReference>
<dbReference type="FunFam" id="2.40.30.10:FF:000023">
    <property type="entry name" value="tRNA-specific 2-thiouridylase MnmA"/>
    <property type="match status" value="1"/>
</dbReference>
<dbReference type="FunFam" id="3.40.50.620:FF:000004">
    <property type="entry name" value="tRNA-specific 2-thiouridylase MnmA"/>
    <property type="match status" value="1"/>
</dbReference>
<dbReference type="Gene3D" id="2.30.30.280">
    <property type="entry name" value="Adenine nucleotide alpha hydrolases-like domains"/>
    <property type="match status" value="1"/>
</dbReference>
<dbReference type="Gene3D" id="3.40.50.620">
    <property type="entry name" value="HUPs"/>
    <property type="match status" value="1"/>
</dbReference>
<dbReference type="Gene3D" id="2.40.30.10">
    <property type="entry name" value="Translation factors"/>
    <property type="match status" value="1"/>
</dbReference>
<dbReference type="HAMAP" id="MF_00144">
    <property type="entry name" value="tRNA_thiouridyl_MnmA"/>
    <property type="match status" value="1"/>
</dbReference>
<dbReference type="InterPro" id="IPR004506">
    <property type="entry name" value="MnmA-like"/>
</dbReference>
<dbReference type="InterPro" id="IPR046885">
    <property type="entry name" value="MnmA-like_C"/>
</dbReference>
<dbReference type="InterPro" id="IPR046884">
    <property type="entry name" value="MnmA-like_central"/>
</dbReference>
<dbReference type="InterPro" id="IPR023382">
    <property type="entry name" value="MnmA-like_central_sf"/>
</dbReference>
<dbReference type="InterPro" id="IPR014729">
    <property type="entry name" value="Rossmann-like_a/b/a_fold"/>
</dbReference>
<dbReference type="NCBIfam" id="NF001138">
    <property type="entry name" value="PRK00143.1"/>
    <property type="match status" value="1"/>
</dbReference>
<dbReference type="NCBIfam" id="TIGR00420">
    <property type="entry name" value="trmU"/>
    <property type="match status" value="1"/>
</dbReference>
<dbReference type="PANTHER" id="PTHR11933:SF5">
    <property type="entry name" value="MITOCHONDRIAL TRNA-SPECIFIC 2-THIOURIDYLASE 1"/>
    <property type="match status" value="1"/>
</dbReference>
<dbReference type="PANTHER" id="PTHR11933">
    <property type="entry name" value="TRNA 5-METHYLAMINOMETHYL-2-THIOURIDYLATE -METHYLTRANSFERASE"/>
    <property type="match status" value="1"/>
</dbReference>
<dbReference type="Pfam" id="PF03054">
    <property type="entry name" value="tRNA_Me_trans"/>
    <property type="match status" value="1"/>
</dbReference>
<dbReference type="Pfam" id="PF20258">
    <property type="entry name" value="tRNA_Me_trans_C"/>
    <property type="match status" value="1"/>
</dbReference>
<dbReference type="Pfam" id="PF20259">
    <property type="entry name" value="tRNA_Me_trans_M"/>
    <property type="match status" value="1"/>
</dbReference>
<dbReference type="SUPFAM" id="SSF52402">
    <property type="entry name" value="Adenine nucleotide alpha hydrolases-like"/>
    <property type="match status" value="1"/>
</dbReference>
<gene>
    <name evidence="1" type="primary">mnmA</name>
    <name type="ordered locus">KPN78578_11130</name>
    <name type="ORF">KPN_01141</name>
</gene>
<sequence>MSESQKKVIVGMSGGVDSSVSAYLLLQQGYKVEGLFMKNWEEDDGEEYCTAAADLADAQAVCDKLGIELHTVNFAAEYWDNVFELFLEEYKAGRTPNPDILCNKEIKFKAFLEFAAEDLGADYIATGHYVRRADVDGKSQLLRGLDGNKDQSYFLYTLSHEQIAQSLFPVGELEKPQVRKIAEELDLITAKKKDSTGICFIGERKFRDFLGRYLPAQPGKILTVDGEEIGTHQGLMYHTLGQRKGLGIGGTKEGSEDPWYVVDKDVENNILIVAQGHDHPRLMSVGLIAQQLHWVNREPLQGTLRCTVKTRYRQTDIPCTVTALDEDRIEVRFDEPVAAVTPGQSAVFYLGEVCLGGGIIEQRLPLQS</sequence>